<organism>
    <name type="scientific">Mus musculus</name>
    <name type="common">Mouse</name>
    <dbReference type="NCBI Taxonomy" id="10090"/>
    <lineage>
        <taxon>Eukaryota</taxon>
        <taxon>Metazoa</taxon>
        <taxon>Chordata</taxon>
        <taxon>Craniata</taxon>
        <taxon>Vertebrata</taxon>
        <taxon>Euteleostomi</taxon>
        <taxon>Mammalia</taxon>
        <taxon>Eutheria</taxon>
        <taxon>Euarchontoglires</taxon>
        <taxon>Glires</taxon>
        <taxon>Rodentia</taxon>
        <taxon>Myomorpha</taxon>
        <taxon>Muroidea</taxon>
        <taxon>Muridae</taxon>
        <taxon>Murinae</taxon>
        <taxon>Mus</taxon>
        <taxon>Mus</taxon>
    </lineage>
</organism>
<proteinExistence type="evidence at protein level"/>
<sequence>MQLEIQVALNFIISYLYNKLPRRRVNIFGEELERLLKKKYEGHWYPEKPYKGSGFRCIHVGEKVDPVIEQASKESGLDIDDVRGNLPQDLSVWIDPFEVSYQIGEKGPVKVLYVDDSSETGCELDKEIKNSFNPEAQVFMPISDPASSVSSSPSPPFGHSAAVSPTFMPRSTQPLTFTTATFAATKFGSTKMKNSGRSSKVARTSPINLGLTVNVNDLLKQKAISSSVHSLYGLGLGSQQQPQPQPQQQQQQQPSSSQPPPPLPQQQQQQPQQQQQQQQQTSALSPNAKEFIFPNMQGQGSSTNGMFPGDSPLNLSPLQYSNAFDVFAAYGGLNEKSFVDGLNFSLNNMQYSNQQFQPVMAN</sequence>
<gene>
    <name type="primary">Tob1</name>
    <name type="synonym">Tob</name>
    <name type="synonym">Trob</name>
</gene>
<protein>
    <recommendedName>
        <fullName>Protein Tob1</fullName>
    </recommendedName>
    <alternativeName>
        <fullName>Transducer of erbB-2 1</fullName>
    </alternativeName>
</protein>
<comment type="function">
    <text evidence="2">Anti-proliferative protein; the function is mediated by association with deadenylase subunits of the CCR4-NOT complex. Mediates CPEB3-accelerated mRNA deadenylation by binding to CPEB3 and recruiting CNOT7 which leads to target mRNA deadenylation and decay.</text>
</comment>
<comment type="subunit">
    <text evidence="2 3">Interacts with ERBB2. Interacts with CNOT7. Interacts with CPEB3 (via C-terminal RNA-binding region); recruits CNOT7 to CPEB3 to form a ternary complex required for mRNA deadenylation and decay. Interacts with CNOT8. Interacts with CPEB4.</text>
</comment>
<comment type="interaction">
    <interactant intactId="EBI-8527498">
        <id>Q61471</id>
    </interactant>
    <interactant intactId="EBI-6916167">
        <id>P57737</id>
        <label>CORO7</label>
    </interactant>
    <organismsDiffer>true</organismsDiffer>
    <experiments>3</experiments>
</comment>
<comment type="subcellular location">
    <subcellularLocation>
        <location evidence="5">Cytoplasm</location>
    </subcellularLocation>
    <subcellularLocation>
        <location evidence="5">Nucleus</location>
    </subcellularLocation>
    <text>Only a small fraction localizes to the cytoplasm except in late S-phase where more than half of proteins become cytoplasmic.</text>
</comment>
<comment type="tissue specificity">
    <text>Ubiquitous.</text>
</comment>
<comment type="PTM">
    <text evidence="1">Phosphorylated on Ser and Thr residues.</text>
</comment>
<comment type="similarity">
    <text evidence="6">Belongs to the BTG family.</text>
</comment>
<feature type="chain" id="PRO_0000143813" description="Protein Tob1">
    <location>
        <begin position="1"/>
        <end position="362"/>
    </location>
</feature>
<feature type="region of interest" description="Important for nuclear localization">
    <location>
        <begin position="82"/>
        <end position="92"/>
    </location>
</feature>
<feature type="region of interest" description="Disordered" evidence="4">
    <location>
        <begin position="144"/>
        <end position="171"/>
    </location>
</feature>
<feature type="region of interest" description="Required for interaction with CPEB3" evidence="2">
    <location>
        <begin position="161"/>
        <end position="220"/>
    </location>
</feature>
<feature type="region of interest" description="Disordered" evidence="4">
    <location>
        <begin position="234"/>
        <end position="284"/>
    </location>
</feature>
<feature type="short sequence motif" description="Bipartite nuclear localization signal">
    <location>
        <begin position="22"/>
        <end position="39"/>
    </location>
</feature>
<feature type="short sequence motif" description="Nuclear export signal">
    <location>
        <begin position="228"/>
        <end position="236"/>
    </location>
</feature>
<feature type="compositionally biased region" description="Low complexity" evidence="4">
    <location>
        <begin position="144"/>
        <end position="160"/>
    </location>
</feature>
<feature type="compositionally biased region" description="Low complexity" evidence="4">
    <location>
        <begin position="238"/>
        <end position="256"/>
    </location>
</feature>
<feature type="compositionally biased region" description="Low complexity" evidence="4">
    <location>
        <begin position="265"/>
        <end position="280"/>
    </location>
</feature>
<feature type="modified residue" description="Phosphothreonine" evidence="2">
    <location>
        <position position="204"/>
    </location>
</feature>
<feature type="mutagenesis site" description="Localizes to cytoplasm; when associated with 37-NNN-39." evidence="5">
    <original>RRR</original>
    <variation>QQQ</variation>
    <location>
        <begin position="22"/>
        <end position="24"/>
    </location>
</feature>
<feature type="mutagenesis site" description="Localizes to cytoplasm; when associated with 22-QQQ-24." evidence="5">
    <original>KKK</original>
    <variation>NNN</variation>
    <location>
        <begin position="37"/>
        <end position="39"/>
    </location>
</feature>
<feature type="mutagenesis site" description="Not exported to the cytoplasm; when associated with A-236." evidence="5">
    <original>L</original>
    <variation>A</variation>
    <location>
        <position position="234"/>
    </location>
</feature>
<feature type="mutagenesis site" description="Not exported to the cytoplasm; when associated with A-234." evidence="5">
    <original>L</original>
    <variation>A</variation>
    <location>
        <position position="236"/>
    </location>
</feature>
<feature type="sequence conflict" description="In Ref. 1; BAA11384." evidence="6" ref="1">
    <original>A</original>
    <variation>P</variation>
    <location>
        <position position="136"/>
    </location>
</feature>
<feature type="sequence conflict" description="In Ref. 1; BAA11384." evidence="6" ref="1">
    <original>D</original>
    <variation>H</variation>
    <location>
        <position position="217"/>
    </location>
</feature>
<feature type="sequence conflict" description="In Ref. 1; BAA11384." evidence="6" ref="1">
    <original>P</original>
    <variation>PQ</variation>
    <location>
        <position position="271"/>
    </location>
</feature>
<accession>Q61471</accession>
<accession>Q640M3</accession>
<dbReference type="EMBL" id="D78382">
    <property type="protein sequence ID" value="BAA11384.1"/>
    <property type="molecule type" value="Genomic_DNA"/>
</dbReference>
<dbReference type="EMBL" id="AL645846">
    <property type="status" value="NOT_ANNOTATED_CDS"/>
    <property type="molecule type" value="Genomic_DNA"/>
</dbReference>
<dbReference type="EMBL" id="BC082588">
    <property type="protein sequence ID" value="AAH82588.1"/>
    <property type="molecule type" value="mRNA"/>
</dbReference>
<dbReference type="CCDS" id="CCDS25250.1"/>
<dbReference type="RefSeq" id="NP_033453.2">
    <property type="nucleotide sequence ID" value="NM_009427.2"/>
</dbReference>
<dbReference type="RefSeq" id="XP_030101781.1">
    <property type="nucleotide sequence ID" value="XM_030245921.1"/>
</dbReference>
<dbReference type="SMR" id="Q61471"/>
<dbReference type="BioGRID" id="204322">
    <property type="interactions" value="2"/>
</dbReference>
<dbReference type="CORUM" id="Q61471"/>
<dbReference type="FunCoup" id="Q61471">
    <property type="interactions" value="1337"/>
</dbReference>
<dbReference type="IntAct" id="Q61471">
    <property type="interactions" value="1"/>
</dbReference>
<dbReference type="MINT" id="Q61471"/>
<dbReference type="STRING" id="10090.ENSMUSP00000036039"/>
<dbReference type="GlyGen" id="Q61471">
    <property type="glycosylation" value="2 sites, 1 O-linked glycan (2 sites)"/>
</dbReference>
<dbReference type="iPTMnet" id="Q61471"/>
<dbReference type="PhosphoSitePlus" id="Q61471"/>
<dbReference type="PaxDb" id="10090-ENSMUSP00000036039"/>
<dbReference type="ProteomicsDB" id="259485"/>
<dbReference type="Antibodypedia" id="4398">
    <property type="antibodies" value="278 antibodies from 32 providers"/>
</dbReference>
<dbReference type="DNASU" id="22057"/>
<dbReference type="Ensembl" id="ENSMUST00000041589.6">
    <property type="protein sequence ID" value="ENSMUSP00000036039.6"/>
    <property type="gene ID" value="ENSMUSG00000037573.6"/>
</dbReference>
<dbReference type="GeneID" id="22057"/>
<dbReference type="KEGG" id="mmu:22057"/>
<dbReference type="UCSC" id="uc007kyf.1">
    <property type="organism name" value="mouse"/>
</dbReference>
<dbReference type="AGR" id="MGI:1349721"/>
<dbReference type="CTD" id="10140"/>
<dbReference type="MGI" id="MGI:1349721">
    <property type="gene designation" value="Tob1"/>
</dbReference>
<dbReference type="VEuPathDB" id="HostDB:ENSMUSG00000037573"/>
<dbReference type="eggNOG" id="KOG4006">
    <property type="taxonomic scope" value="Eukaryota"/>
</dbReference>
<dbReference type="GeneTree" id="ENSGT00940000154208"/>
<dbReference type="HOGENOM" id="CLU_034687_0_0_1"/>
<dbReference type="InParanoid" id="Q61471"/>
<dbReference type="OMA" id="NNGMFPG"/>
<dbReference type="OrthoDB" id="19928at2759"/>
<dbReference type="PhylomeDB" id="Q61471"/>
<dbReference type="TreeFam" id="TF105274"/>
<dbReference type="BioGRID-ORCS" id="22057">
    <property type="hits" value="2 hits in 79 CRISPR screens"/>
</dbReference>
<dbReference type="CD-CODE" id="AD9D4934">
    <property type="entry name" value="P-body"/>
</dbReference>
<dbReference type="ChiTaRS" id="Tob1">
    <property type="organism name" value="mouse"/>
</dbReference>
<dbReference type="PRO" id="PR:Q61471"/>
<dbReference type="Proteomes" id="UP000000589">
    <property type="component" value="Chromosome 11"/>
</dbReference>
<dbReference type="RNAct" id="Q61471">
    <property type="molecule type" value="protein"/>
</dbReference>
<dbReference type="Bgee" id="ENSMUSG00000037573">
    <property type="expression patterns" value="Expressed in extensor digitorum longus and 262 other cell types or tissues"/>
</dbReference>
<dbReference type="GO" id="GO:0030014">
    <property type="term" value="C:CCR4-NOT complex"/>
    <property type="evidence" value="ECO:0000250"/>
    <property type="project" value="UniProtKB"/>
</dbReference>
<dbReference type="GO" id="GO:0005737">
    <property type="term" value="C:cytoplasm"/>
    <property type="evidence" value="ECO:0000314"/>
    <property type="project" value="MGI"/>
</dbReference>
<dbReference type="GO" id="GO:0005634">
    <property type="term" value="C:nucleus"/>
    <property type="evidence" value="ECO:0007669"/>
    <property type="project" value="UniProtKB-SubCell"/>
</dbReference>
<dbReference type="GO" id="GO:0030971">
    <property type="term" value="F:receptor tyrosine kinase binding"/>
    <property type="evidence" value="ECO:0000250"/>
    <property type="project" value="UniProtKB"/>
</dbReference>
<dbReference type="GO" id="GO:0046332">
    <property type="term" value="F:SMAD binding"/>
    <property type="evidence" value="ECO:0000314"/>
    <property type="project" value="MGI"/>
</dbReference>
<dbReference type="GO" id="GO:0003714">
    <property type="term" value="F:transcription corepressor activity"/>
    <property type="evidence" value="ECO:0000314"/>
    <property type="project" value="MGI"/>
</dbReference>
<dbReference type="GO" id="GO:0030514">
    <property type="term" value="P:negative regulation of BMP signaling pathway"/>
    <property type="evidence" value="ECO:0000314"/>
    <property type="project" value="MGI"/>
</dbReference>
<dbReference type="GO" id="GO:0008285">
    <property type="term" value="P:negative regulation of cell population proliferation"/>
    <property type="evidence" value="ECO:0000250"/>
    <property type="project" value="UniProtKB"/>
</dbReference>
<dbReference type="GO" id="GO:0060212">
    <property type="term" value="P:negative regulation of nuclear-transcribed mRNA poly(A) tail shortening"/>
    <property type="evidence" value="ECO:0000250"/>
    <property type="project" value="UniProtKB"/>
</dbReference>
<dbReference type="GO" id="GO:0045668">
    <property type="term" value="P:negative regulation of osteoblast differentiation"/>
    <property type="evidence" value="ECO:0000315"/>
    <property type="project" value="MGI"/>
</dbReference>
<dbReference type="GO" id="GO:0017148">
    <property type="term" value="P:negative regulation of translation"/>
    <property type="evidence" value="ECO:0000250"/>
    <property type="project" value="UniProtKB"/>
</dbReference>
<dbReference type="GO" id="GO:1900153">
    <property type="term" value="P:positive regulation of nuclear-transcribed mRNA catabolic process, deadenylation-dependent decay"/>
    <property type="evidence" value="ECO:0000250"/>
    <property type="project" value="UniProtKB"/>
</dbReference>
<dbReference type="GO" id="GO:0060213">
    <property type="term" value="P:positive regulation of nuclear-transcribed mRNA poly(A) tail shortening"/>
    <property type="evidence" value="ECO:0000250"/>
    <property type="project" value="UniProtKB"/>
</dbReference>
<dbReference type="GO" id="GO:0060390">
    <property type="term" value="P:regulation of SMAD protein signal transduction"/>
    <property type="evidence" value="ECO:0000314"/>
    <property type="project" value="MGI"/>
</dbReference>
<dbReference type="FunFam" id="3.90.640.90:FF:000001">
    <property type="entry name" value="TOB1 isoform 1"/>
    <property type="match status" value="1"/>
</dbReference>
<dbReference type="Gene3D" id="3.90.640.90">
    <property type="entry name" value="Anti-proliferative protein, N-terminal domain"/>
    <property type="match status" value="1"/>
</dbReference>
<dbReference type="InterPro" id="IPR002087">
    <property type="entry name" value="Anti_prolifrtn"/>
</dbReference>
<dbReference type="InterPro" id="IPR036054">
    <property type="entry name" value="BTG-like_sf"/>
</dbReference>
<dbReference type="InterPro" id="IPR015676">
    <property type="entry name" value="Tob1/2"/>
</dbReference>
<dbReference type="PANTHER" id="PTHR17537:SF6">
    <property type="entry name" value="PROTEIN TOB1"/>
    <property type="match status" value="1"/>
</dbReference>
<dbReference type="PANTHER" id="PTHR17537">
    <property type="entry name" value="TRANSDUCER OF ERBB2 TOB"/>
    <property type="match status" value="1"/>
</dbReference>
<dbReference type="Pfam" id="PF07742">
    <property type="entry name" value="BTG"/>
    <property type="match status" value="1"/>
</dbReference>
<dbReference type="PRINTS" id="PR00310">
    <property type="entry name" value="ANTIPRLFBTG1"/>
</dbReference>
<dbReference type="SMART" id="SM00099">
    <property type="entry name" value="btg1"/>
    <property type="match status" value="1"/>
</dbReference>
<dbReference type="SUPFAM" id="SSF160696">
    <property type="entry name" value="BTG domain-like"/>
    <property type="match status" value="1"/>
</dbReference>
<dbReference type="PROSITE" id="PS00960">
    <property type="entry name" value="BTG_1"/>
    <property type="match status" value="1"/>
</dbReference>
<dbReference type="PROSITE" id="PS01203">
    <property type="entry name" value="BTG_2"/>
    <property type="match status" value="1"/>
</dbReference>
<keyword id="KW-0963">Cytoplasm</keyword>
<keyword id="KW-0539">Nucleus</keyword>
<keyword id="KW-0597">Phosphoprotein</keyword>
<keyword id="KW-1185">Reference proteome</keyword>
<reference key="1">
    <citation type="journal article" date="1997" name="Gene">
        <title>Cloning and characterization of the mouse tob gene.</title>
        <authorList>
            <person name="Yoshida Y."/>
            <person name="Matuda S."/>
            <person name="Yamamoto T."/>
        </authorList>
    </citation>
    <scope>NUCLEOTIDE SEQUENCE [GENOMIC DNA]</scope>
    <source>
        <strain>129/SvJ</strain>
        <tissue>Liver</tissue>
    </source>
</reference>
<reference key="2">
    <citation type="journal article" date="2009" name="PLoS Biol.">
        <title>Lineage-specific biology revealed by a finished genome assembly of the mouse.</title>
        <authorList>
            <person name="Church D.M."/>
            <person name="Goodstadt L."/>
            <person name="Hillier L.W."/>
            <person name="Zody M.C."/>
            <person name="Goldstein S."/>
            <person name="She X."/>
            <person name="Bult C.J."/>
            <person name="Agarwala R."/>
            <person name="Cherry J.L."/>
            <person name="DiCuccio M."/>
            <person name="Hlavina W."/>
            <person name="Kapustin Y."/>
            <person name="Meric P."/>
            <person name="Maglott D."/>
            <person name="Birtle Z."/>
            <person name="Marques A.C."/>
            <person name="Graves T."/>
            <person name="Zhou S."/>
            <person name="Teague B."/>
            <person name="Potamousis K."/>
            <person name="Churas C."/>
            <person name="Place M."/>
            <person name="Herschleb J."/>
            <person name="Runnheim R."/>
            <person name="Forrest D."/>
            <person name="Amos-Landgraf J."/>
            <person name="Schwartz D.C."/>
            <person name="Cheng Z."/>
            <person name="Lindblad-Toh K."/>
            <person name="Eichler E.E."/>
            <person name="Ponting C.P."/>
        </authorList>
    </citation>
    <scope>NUCLEOTIDE SEQUENCE [LARGE SCALE GENOMIC DNA]</scope>
    <source>
        <strain>C57BL/6J</strain>
    </source>
</reference>
<reference key="3">
    <citation type="journal article" date="2004" name="Genome Res.">
        <title>The status, quality, and expansion of the NIH full-length cDNA project: the Mammalian Gene Collection (MGC).</title>
        <authorList>
            <consortium name="The MGC Project Team"/>
        </authorList>
    </citation>
    <scope>NUCLEOTIDE SEQUENCE [LARGE SCALE MRNA]</scope>
    <source>
        <strain>C57BL/6J</strain>
        <tissue>Brain</tissue>
    </source>
</reference>
<reference key="4">
    <citation type="journal article" date="2004" name="Oncogene">
        <title>Nuclear localization of Tob is important for regulation of its antiproliferative activity.</title>
        <authorList>
            <person name="Kawamura-Tsuzuku J."/>
            <person name="Suzuki T."/>
            <person name="Yoshida Y."/>
            <person name="Yamamoto T."/>
        </authorList>
    </citation>
    <scope>SUBCELLULAR LOCATION</scope>
    <scope>NUCLEAR LOCALIZATION SIGNAL</scope>
    <scope>NUCLEAR EXPORT SIGNAL</scope>
    <scope>MUTAGENESIS OF 22-ARG--ARG-24; 37-LYS--LYS-39; LEU-234 AND LEU-236</scope>
</reference>
<name>TOB1_MOUSE</name>
<evidence type="ECO:0000250" key="1"/>
<evidence type="ECO:0000250" key="2">
    <source>
        <dbReference type="UniProtKB" id="P50616"/>
    </source>
</evidence>
<evidence type="ECO:0000250" key="3">
    <source>
        <dbReference type="UniProtKB" id="Q8R5K6"/>
    </source>
</evidence>
<evidence type="ECO:0000256" key="4">
    <source>
        <dbReference type="SAM" id="MobiDB-lite"/>
    </source>
</evidence>
<evidence type="ECO:0000269" key="5">
    <source>
    </source>
</evidence>
<evidence type="ECO:0000305" key="6"/>